<gene>
    <name evidence="1" type="primary">adk</name>
    <name type="ordered locus">SEQ_0076</name>
</gene>
<keyword id="KW-0067">ATP-binding</keyword>
<keyword id="KW-0963">Cytoplasm</keyword>
<keyword id="KW-0418">Kinase</keyword>
<keyword id="KW-0545">Nucleotide biosynthesis</keyword>
<keyword id="KW-0547">Nucleotide-binding</keyword>
<keyword id="KW-0808">Transferase</keyword>
<organism>
    <name type="scientific">Streptococcus equi subsp. equi (strain 4047)</name>
    <dbReference type="NCBI Taxonomy" id="553482"/>
    <lineage>
        <taxon>Bacteria</taxon>
        <taxon>Bacillati</taxon>
        <taxon>Bacillota</taxon>
        <taxon>Bacilli</taxon>
        <taxon>Lactobacillales</taxon>
        <taxon>Streptococcaceae</taxon>
        <taxon>Streptococcus</taxon>
    </lineage>
</organism>
<sequence>MNLLIMGLPGAGKGTQAAKIVETFELIHISTGDMFRAAMANQTEMGVLAKSYIDKGDLVPDEVTNGIVKERLAQADIKEKGFLLDGYPRTIEQAHALDETLKALGLTLDGVINIEVDPASLIDRLSGRIINKKTGETFHKIFNPPVGDYKEEDFYQREDDKPETVKRRLDVNIAQGEPIIKHYRQAGIVRDIDGNKDISEVFADIKKVIENLK</sequence>
<accession>C0M6X3</accession>
<proteinExistence type="inferred from homology"/>
<evidence type="ECO:0000255" key="1">
    <source>
        <dbReference type="HAMAP-Rule" id="MF_00235"/>
    </source>
</evidence>
<protein>
    <recommendedName>
        <fullName evidence="1">Adenylate kinase</fullName>
        <shortName evidence="1">AK</shortName>
        <ecNumber evidence="1">2.7.4.3</ecNumber>
    </recommendedName>
    <alternativeName>
        <fullName evidence="1">ATP-AMP transphosphorylase</fullName>
    </alternativeName>
    <alternativeName>
        <fullName evidence="1">ATP:AMP phosphotransferase</fullName>
    </alternativeName>
    <alternativeName>
        <fullName evidence="1">Adenylate monophosphate kinase</fullName>
    </alternativeName>
</protein>
<name>KAD_STRE4</name>
<dbReference type="EC" id="2.7.4.3" evidence="1"/>
<dbReference type="EMBL" id="FM204883">
    <property type="protein sequence ID" value="CAW92006.1"/>
    <property type="molecule type" value="Genomic_DNA"/>
</dbReference>
<dbReference type="RefSeq" id="WP_012678795.1">
    <property type="nucleotide sequence ID" value="NC_012471.1"/>
</dbReference>
<dbReference type="SMR" id="C0M6X3"/>
<dbReference type="KEGG" id="seu:SEQ_0076"/>
<dbReference type="HOGENOM" id="CLU_032354_1_2_9"/>
<dbReference type="OrthoDB" id="9805030at2"/>
<dbReference type="UniPathway" id="UPA00588">
    <property type="reaction ID" value="UER00649"/>
</dbReference>
<dbReference type="Proteomes" id="UP000001365">
    <property type="component" value="Chromosome"/>
</dbReference>
<dbReference type="GO" id="GO:0005737">
    <property type="term" value="C:cytoplasm"/>
    <property type="evidence" value="ECO:0007669"/>
    <property type="project" value="UniProtKB-SubCell"/>
</dbReference>
<dbReference type="GO" id="GO:0004017">
    <property type="term" value="F:adenylate kinase activity"/>
    <property type="evidence" value="ECO:0007669"/>
    <property type="project" value="UniProtKB-UniRule"/>
</dbReference>
<dbReference type="GO" id="GO:0005524">
    <property type="term" value="F:ATP binding"/>
    <property type="evidence" value="ECO:0007669"/>
    <property type="project" value="UniProtKB-UniRule"/>
</dbReference>
<dbReference type="GO" id="GO:0044209">
    <property type="term" value="P:AMP salvage"/>
    <property type="evidence" value="ECO:0007669"/>
    <property type="project" value="UniProtKB-UniRule"/>
</dbReference>
<dbReference type="CDD" id="cd01428">
    <property type="entry name" value="ADK"/>
    <property type="match status" value="1"/>
</dbReference>
<dbReference type="FunFam" id="3.40.50.300:FF:000106">
    <property type="entry name" value="Adenylate kinase mitochondrial"/>
    <property type="match status" value="1"/>
</dbReference>
<dbReference type="Gene3D" id="3.40.50.300">
    <property type="entry name" value="P-loop containing nucleotide triphosphate hydrolases"/>
    <property type="match status" value="1"/>
</dbReference>
<dbReference type="HAMAP" id="MF_00235">
    <property type="entry name" value="Adenylate_kinase_Adk"/>
    <property type="match status" value="1"/>
</dbReference>
<dbReference type="InterPro" id="IPR006259">
    <property type="entry name" value="Adenyl_kin_sub"/>
</dbReference>
<dbReference type="InterPro" id="IPR000850">
    <property type="entry name" value="Adenylat/UMP-CMP_kin"/>
</dbReference>
<dbReference type="InterPro" id="IPR033690">
    <property type="entry name" value="Adenylat_kinase_CS"/>
</dbReference>
<dbReference type="InterPro" id="IPR027417">
    <property type="entry name" value="P-loop_NTPase"/>
</dbReference>
<dbReference type="NCBIfam" id="TIGR01351">
    <property type="entry name" value="adk"/>
    <property type="match status" value="1"/>
</dbReference>
<dbReference type="NCBIfam" id="NF001380">
    <property type="entry name" value="PRK00279.1-2"/>
    <property type="match status" value="1"/>
</dbReference>
<dbReference type="NCBIfam" id="NF001381">
    <property type="entry name" value="PRK00279.1-3"/>
    <property type="match status" value="1"/>
</dbReference>
<dbReference type="NCBIfam" id="NF001382">
    <property type="entry name" value="PRK00279.1-4"/>
    <property type="match status" value="1"/>
</dbReference>
<dbReference type="NCBIfam" id="NF011100">
    <property type="entry name" value="PRK14527.1"/>
    <property type="match status" value="1"/>
</dbReference>
<dbReference type="PANTHER" id="PTHR23359">
    <property type="entry name" value="NUCLEOTIDE KINASE"/>
    <property type="match status" value="1"/>
</dbReference>
<dbReference type="Pfam" id="PF00406">
    <property type="entry name" value="ADK"/>
    <property type="match status" value="1"/>
</dbReference>
<dbReference type="PRINTS" id="PR00094">
    <property type="entry name" value="ADENYLTKNASE"/>
</dbReference>
<dbReference type="SUPFAM" id="SSF52540">
    <property type="entry name" value="P-loop containing nucleoside triphosphate hydrolases"/>
    <property type="match status" value="1"/>
</dbReference>
<dbReference type="PROSITE" id="PS00113">
    <property type="entry name" value="ADENYLATE_KINASE"/>
    <property type="match status" value="1"/>
</dbReference>
<reference key="1">
    <citation type="journal article" date="2009" name="PLoS Pathog.">
        <title>Genomic evidence for the evolution of Streptococcus equi: host restriction, increased virulence, and genetic exchange with human pathogens.</title>
        <authorList>
            <person name="Holden M.T.G."/>
            <person name="Heather Z."/>
            <person name="Paillot R."/>
            <person name="Steward K.F."/>
            <person name="Webb K."/>
            <person name="Ainslie F."/>
            <person name="Jourdan T."/>
            <person name="Bason N.C."/>
            <person name="Holroyd N.E."/>
            <person name="Mungall K."/>
            <person name="Quail M.A."/>
            <person name="Sanders M."/>
            <person name="Simmonds M."/>
            <person name="Willey D."/>
            <person name="Brooks K."/>
            <person name="Aanensen D.M."/>
            <person name="Spratt B.G."/>
            <person name="Jolley K.A."/>
            <person name="Maiden M.C.J."/>
            <person name="Kehoe M."/>
            <person name="Chanter N."/>
            <person name="Bentley S.D."/>
            <person name="Robinson C."/>
            <person name="Maskell D.J."/>
            <person name="Parkhill J."/>
            <person name="Waller A.S."/>
        </authorList>
    </citation>
    <scope>NUCLEOTIDE SEQUENCE [LARGE SCALE GENOMIC DNA]</scope>
    <source>
        <strain>4047</strain>
    </source>
</reference>
<comment type="function">
    <text evidence="1">Catalyzes the reversible transfer of the terminal phosphate group between ATP and AMP. Plays an important role in cellular energy homeostasis and in adenine nucleotide metabolism.</text>
</comment>
<comment type="catalytic activity">
    <reaction evidence="1">
        <text>AMP + ATP = 2 ADP</text>
        <dbReference type="Rhea" id="RHEA:12973"/>
        <dbReference type="ChEBI" id="CHEBI:30616"/>
        <dbReference type="ChEBI" id="CHEBI:456215"/>
        <dbReference type="ChEBI" id="CHEBI:456216"/>
        <dbReference type="EC" id="2.7.4.3"/>
    </reaction>
</comment>
<comment type="pathway">
    <text evidence="1">Purine metabolism; AMP biosynthesis via salvage pathway; AMP from ADP: step 1/1.</text>
</comment>
<comment type="subunit">
    <text evidence="1">Monomer.</text>
</comment>
<comment type="subcellular location">
    <subcellularLocation>
        <location evidence="1">Cytoplasm</location>
    </subcellularLocation>
</comment>
<comment type="domain">
    <text evidence="1">Consists of three domains, a large central CORE domain and two small peripheral domains, NMPbind and LID, which undergo movements during catalysis. The LID domain closes over the site of phosphoryl transfer upon ATP binding. Assembling and dissambling the active center during each catalytic cycle provides an effective means to prevent ATP hydrolysis.</text>
</comment>
<comment type="similarity">
    <text evidence="1">Belongs to the adenylate kinase family.</text>
</comment>
<feature type="chain" id="PRO_1000191167" description="Adenylate kinase">
    <location>
        <begin position="1"/>
        <end position="213"/>
    </location>
</feature>
<feature type="region of interest" description="NMP" evidence="1">
    <location>
        <begin position="30"/>
        <end position="59"/>
    </location>
</feature>
<feature type="region of interest" description="LID" evidence="1">
    <location>
        <begin position="127"/>
        <end position="160"/>
    </location>
</feature>
<feature type="binding site" evidence="1">
    <location>
        <begin position="10"/>
        <end position="15"/>
    </location>
    <ligand>
        <name>ATP</name>
        <dbReference type="ChEBI" id="CHEBI:30616"/>
    </ligand>
</feature>
<feature type="binding site" evidence="1">
    <location>
        <position position="31"/>
    </location>
    <ligand>
        <name>AMP</name>
        <dbReference type="ChEBI" id="CHEBI:456215"/>
    </ligand>
</feature>
<feature type="binding site" evidence="1">
    <location>
        <position position="36"/>
    </location>
    <ligand>
        <name>AMP</name>
        <dbReference type="ChEBI" id="CHEBI:456215"/>
    </ligand>
</feature>
<feature type="binding site" evidence="1">
    <location>
        <begin position="57"/>
        <end position="59"/>
    </location>
    <ligand>
        <name>AMP</name>
        <dbReference type="ChEBI" id="CHEBI:456215"/>
    </ligand>
</feature>
<feature type="binding site" evidence="1">
    <location>
        <begin position="86"/>
        <end position="89"/>
    </location>
    <ligand>
        <name>AMP</name>
        <dbReference type="ChEBI" id="CHEBI:456215"/>
    </ligand>
</feature>
<feature type="binding site" evidence="1">
    <location>
        <position position="93"/>
    </location>
    <ligand>
        <name>AMP</name>
        <dbReference type="ChEBI" id="CHEBI:456215"/>
    </ligand>
</feature>
<feature type="binding site" evidence="1">
    <location>
        <position position="128"/>
    </location>
    <ligand>
        <name>ATP</name>
        <dbReference type="ChEBI" id="CHEBI:30616"/>
    </ligand>
</feature>
<feature type="binding site" evidence="1">
    <location>
        <begin position="137"/>
        <end position="138"/>
    </location>
    <ligand>
        <name>ATP</name>
        <dbReference type="ChEBI" id="CHEBI:30616"/>
    </ligand>
</feature>
<feature type="binding site" evidence="1">
    <location>
        <position position="157"/>
    </location>
    <ligand>
        <name>AMP</name>
        <dbReference type="ChEBI" id="CHEBI:456215"/>
    </ligand>
</feature>
<feature type="binding site" evidence="1">
    <location>
        <position position="168"/>
    </location>
    <ligand>
        <name>AMP</name>
        <dbReference type="ChEBI" id="CHEBI:456215"/>
    </ligand>
</feature>
<feature type="binding site" evidence="1">
    <location>
        <position position="196"/>
    </location>
    <ligand>
        <name>ATP</name>
        <dbReference type="ChEBI" id="CHEBI:30616"/>
    </ligand>
</feature>